<accession>P41823</accession>
<accession>Q6EI08</accession>
<reference key="1">
    <citation type="journal article" date="1995" name="Proc. Natl. Acad. Sci. U.S.A.">
        <title>Evidence for synaptotagmin as an inhibitory clamp on synaptic vesicle release in Aplysia neurons.</title>
        <authorList>
            <person name="Martin K.C."/>
            <person name="Hu Y."/>
            <person name="Armitage B.A."/>
            <person name="Siegelbaum S.A."/>
            <person name="Kandel E.R."/>
            <person name="Kaang B.-K."/>
        </authorList>
    </citation>
    <scope>NUCLEOTIDE SEQUENCE [MRNA] (ISOFORM 2)</scope>
    <scope>FUNCTION</scope>
    <scope>SUBCELLULAR LOCATION</scope>
    <source>
        <tissue>Ganglion</tissue>
    </source>
</reference>
<reference key="2">
    <citation type="journal article" date="2003" name="J. Neurosci.">
        <title>Differential regulation of transmitter release by alternatively spliced forms of synaptotagmin I.</title>
        <authorList>
            <person name="Nakhost A."/>
            <person name="Houeland G."/>
            <person name="Castellucci V.F."/>
            <person name="Sossin W.S."/>
        </authorList>
    </citation>
    <scope>NUCLEOTIDE SEQUENCE [MRNA] (ISOFORM 1)</scope>
    <scope>FUNCTION</scope>
    <scope>SUBCELLULAR LOCATION</scope>
    <scope>PHOSPHORYLATION AT SER-123</scope>
    <scope>MUTAGENESIS OF SER-123</scope>
</reference>
<reference key="3">
    <citation type="journal article" date="2004" name="J. Neurochem.">
        <title>Identification and characterization of a novel C2B splice variant of synaptotagmin I.</title>
        <authorList>
            <person name="Nakhost A."/>
            <person name="Houeland G."/>
            <person name="Blandford V.E."/>
            <person name="Castellucci V.F."/>
            <person name="Sossin W.S."/>
        </authorList>
    </citation>
    <scope>NUCLEOTIDE SEQUENCE [MRNA] (ISOFORM 3)</scope>
    <scope>FUNCTION</scope>
    <scope>SUBCELLULAR LOCATION</scope>
    <scope>INTERACTION WITH SNAP25</scope>
    <scope>MUTAGENESIS OF ASN-347 AND GLY-358</scope>
</reference>
<dbReference type="EMBL" id="U03125">
    <property type="protein sequence ID" value="AAA03567.1"/>
    <property type="molecule type" value="mRNA"/>
</dbReference>
<dbReference type="EMBL" id="AY325502">
    <property type="protein sequence ID" value="AAQ91785.1"/>
    <property type="molecule type" value="mRNA"/>
</dbReference>
<dbReference type="RefSeq" id="NP_001191553.1">
    <property type="nucleotide sequence ID" value="NM_001204624.1"/>
</dbReference>
<dbReference type="RefSeq" id="NP_001191565.1">
    <molecule id="P41823-2"/>
    <property type="nucleotide sequence ID" value="NM_001204636.1"/>
</dbReference>
<dbReference type="SMR" id="P41823"/>
<dbReference type="iPTMnet" id="P41823"/>
<dbReference type="EnsemblMetazoa" id="NM_001204636.1">
    <molecule id="P41823-2"/>
    <property type="protein sequence ID" value="NP_001191565.1"/>
    <property type="gene ID" value="LOC100533340"/>
</dbReference>
<dbReference type="GeneID" id="100533340"/>
<dbReference type="OrthoDB" id="67700at2759"/>
<dbReference type="Proteomes" id="UP000694888">
    <property type="component" value="Unplaced"/>
</dbReference>
<dbReference type="GO" id="GO:0030424">
    <property type="term" value="C:axon"/>
    <property type="evidence" value="ECO:0007669"/>
    <property type="project" value="TreeGrafter"/>
</dbReference>
<dbReference type="GO" id="GO:0031045">
    <property type="term" value="C:dense core granule"/>
    <property type="evidence" value="ECO:0007669"/>
    <property type="project" value="TreeGrafter"/>
</dbReference>
<dbReference type="GO" id="GO:0005886">
    <property type="term" value="C:plasma membrane"/>
    <property type="evidence" value="ECO:0007669"/>
    <property type="project" value="TreeGrafter"/>
</dbReference>
<dbReference type="GO" id="GO:0030672">
    <property type="term" value="C:synaptic vesicle membrane"/>
    <property type="evidence" value="ECO:0000314"/>
    <property type="project" value="UniProtKB"/>
</dbReference>
<dbReference type="GO" id="GO:0005509">
    <property type="term" value="F:calcium ion binding"/>
    <property type="evidence" value="ECO:0000314"/>
    <property type="project" value="UniProtKB"/>
</dbReference>
<dbReference type="GO" id="GO:0005544">
    <property type="term" value="F:calcium-dependent phospholipid binding"/>
    <property type="evidence" value="ECO:0007669"/>
    <property type="project" value="TreeGrafter"/>
</dbReference>
<dbReference type="GO" id="GO:0030276">
    <property type="term" value="F:clathrin binding"/>
    <property type="evidence" value="ECO:0007669"/>
    <property type="project" value="TreeGrafter"/>
</dbReference>
<dbReference type="GO" id="GO:0001786">
    <property type="term" value="F:phosphatidylserine binding"/>
    <property type="evidence" value="ECO:0007669"/>
    <property type="project" value="TreeGrafter"/>
</dbReference>
<dbReference type="GO" id="GO:0000149">
    <property type="term" value="F:SNARE binding"/>
    <property type="evidence" value="ECO:0000314"/>
    <property type="project" value="UniProtKB"/>
</dbReference>
<dbReference type="GO" id="GO:0048791">
    <property type="term" value="P:calcium ion-regulated exocytosis of neurotransmitter"/>
    <property type="evidence" value="ECO:0007669"/>
    <property type="project" value="TreeGrafter"/>
</dbReference>
<dbReference type="GO" id="GO:0045955">
    <property type="term" value="P:negative regulation of calcium ion-dependent exocytosis"/>
    <property type="evidence" value="ECO:0000314"/>
    <property type="project" value="UniProtKB"/>
</dbReference>
<dbReference type="GO" id="GO:0048488">
    <property type="term" value="P:synaptic vesicle endocytosis"/>
    <property type="evidence" value="ECO:0007669"/>
    <property type="project" value="TreeGrafter"/>
</dbReference>
<dbReference type="GO" id="GO:0016079">
    <property type="term" value="P:synaptic vesicle exocytosis"/>
    <property type="evidence" value="ECO:0000314"/>
    <property type="project" value="UniProtKB"/>
</dbReference>
<dbReference type="CDD" id="cd08385">
    <property type="entry name" value="C2A_Synaptotagmin-1-5-6-9-10"/>
    <property type="match status" value="1"/>
</dbReference>
<dbReference type="CDD" id="cd08402">
    <property type="entry name" value="C2B_Synaptotagmin-1"/>
    <property type="match status" value="1"/>
</dbReference>
<dbReference type="FunFam" id="2.60.40.150:FF:000007">
    <property type="entry name" value="Synaptotagmin 1"/>
    <property type="match status" value="1"/>
</dbReference>
<dbReference type="FunFam" id="2.60.40.150:FF:000016">
    <property type="entry name" value="Synaptotagmin 1"/>
    <property type="match status" value="1"/>
</dbReference>
<dbReference type="Gene3D" id="2.60.40.150">
    <property type="entry name" value="C2 domain"/>
    <property type="match status" value="2"/>
</dbReference>
<dbReference type="InterPro" id="IPR000008">
    <property type="entry name" value="C2_dom"/>
</dbReference>
<dbReference type="InterPro" id="IPR035892">
    <property type="entry name" value="C2_domain_sf"/>
</dbReference>
<dbReference type="InterPro" id="IPR001565">
    <property type="entry name" value="Synaptotagmin"/>
</dbReference>
<dbReference type="PANTHER" id="PTHR10024">
    <property type="entry name" value="SYNAPTOTAGMIN"/>
    <property type="match status" value="1"/>
</dbReference>
<dbReference type="PANTHER" id="PTHR10024:SF227">
    <property type="entry name" value="SYNAPTOTAGMIN 1"/>
    <property type="match status" value="1"/>
</dbReference>
<dbReference type="Pfam" id="PF00168">
    <property type="entry name" value="C2"/>
    <property type="match status" value="2"/>
</dbReference>
<dbReference type="PRINTS" id="PR00360">
    <property type="entry name" value="C2DOMAIN"/>
</dbReference>
<dbReference type="PRINTS" id="PR00399">
    <property type="entry name" value="SYNAPTOTAGMN"/>
</dbReference>
<dbReference type="SMART" id="SM00239">
    <property type="entry name" value="C2"/>
    <property type="match status" value="2"/>
</dbReference>
<dbReference type="SUPFAM" id="SSF49562">
    <property type="entry name" value="C2 domain (Calcium/lipid-binding domain, CaLB)"/>
    <property type="match status" value="2"/>
</dbReference>
<dbReference type="PROSITE" id="PS50004">
    <property type="entry name" value="C2"/>
    <property type="match status" value="2"/>
</dbReference>
<gene>
    <name type="primary">SYT1</name>
</gene>
<organism>
    <name type="scientific">Aplysia californica</name>
    <name type="common">California sea hare</name>
    <dbReference type="NCBI Taxonomy" id="6500"/>
    <lineage>
        <taxon>Eukaryota</taxon>
        <taxon>Metazoa</taxon>
        <taxon>Spiralia</taxon>
        <taxon>Lophotrochozoa</taxon>
        <taxon>Mollusca</taxon>
        <taxon>Gastropoda</taxon>
        <taxon>Heterobranchia</taxon>
        <taxon>Euthyneura</taxon>
        <taxon>Tectipleura</taxon>
        <taxon>Aplysiida</taxon>
        <taxon>Aplysioidea</taxon>
        <taxon>Aplysiidae</taxon>
        <taxon>Aplysia</taxon>
    </lineage>
</organism>
<sequence length="428" mass="47687">MDSLLARVKRAADADALNPAQEGVTGGPDAAGLPDVSTSSPGGGGAGDKLKEKMDEYKDKLINEIENLPIWAIVLIIAGSLLFLVCCVYCVCRRSCRKRKKKEGKKGLKGAVDLKSVQLLGNSYKEKVQPDLDELPVNMEDNEDAESTKSEVKLGKLQFSLDYDFQKGELSVNVIQAADLPGMDMSGTSDPYVKVYLLPDKKKKYETKVHRKTLNPVFNESFTFKVPYAEVGSKILTFAVYDFDRFSKHDQIGQVQVPLNSIDLGRVVEDWKDLQSPDTESEKENKLGDICFSLRYVPTAGKLTVVILEAKNLKKMDVGGLSDPYVKIALLQGTKRLKKKKTTIKKNTLNPYFNESFGFEVPFEQIQKVTLIITVVDYDRIGTSEPIGRCVLGCNSSGTELRHWSDMLANPRRPIAQWHTLQEVPEKN</sequence>
<protein>
    <recommendedName>
        <fullName>Synaptotagmin-1</fullName>
    </recommendedName>
    <alternativeName>
        <fullName>Synaptotagmin I</fullName>
    </alternativeName>
    <alternativeName>
        <fullName>p65</fullName>
    </alternativeName>
</protein>
<comment type="function">
    <text evidence="5 6 7">Acts as inhibitor of neurotransmitter release. Overexpression leads to a decrease in the amplitude of the excitatory postsynaptic potential in dissected cholinergic and glutaminergic neurons while depletion with antisense oligonucleotides leads to an increase. Overexpression of isoform 1 blocks the reversal of synaptic depression by serotonin in sensory neurons.</text>
</comment>
<comment type="cofactor">
    <cofactor evidence="3">
        <name>Ca(2+)</name>
        <dbReference type="ChEBI" id="CHEBI:29108"/>
    </cofactor>
    <text evidence="1">Binds 3 Ca(2+) ions per subunit. The ions are bound to the C2 domains.</text>
</comment>
<comment type="subunit">
    <text>Binds SNAP25. Isoform 3 binds SNAP25 with higher affinity.</text>
</comment>
<comment type="subcellular location">
    <subcellularLocation>
        <location>Cytoplasmic vesicle</location>
        <location>Secretory vesicle</location>
        <location>Synaptic vesicle membrane</location>
        <topology>Single-pass membrane protein</topology>
    </subcellularLocation>
    <subcellularLocation>
        <location>Synapse</location>
    </subcellularLocation>
    <text>And vesicle-like structures.</text>
</comment>
<comment type="alternative products">
    <event type="alternative splicing"/>
    <isoform>
        <id>P41823-1</id>
        <name>1</name>
        <name>Syt1VQ</name>
        <sequence type="displayed"/>
    </isoform>
    <isoform>
        <id>P41823-2</id>
        <name>2</name>
        <name>Syt1</name>
        <name>Syt1 C2B alpha</name>
        <sequence type="described" ref="VSP_013344"/>
    </isoform>
    <isoform>
        <id>P41823-3</id>
        <name>3</name>
        <name>Syt1 C2B beta</name>
        <sequence type="described" ref="VSP_013345"/>
    </isoform>
</comment>
<comment type="similarity">
    <text evidence="10">Belongs to the synaptotagmin family.</text>
</comment>
<keyword id="KW-0025">Alternative splicing</keyword>
<keyword id="KW-0106">Calcium</keyword>
<keyword id="KW-0968">Cytoplasmic vesicle</keyword>
<keyword id="KW-0472">Membrane</keyword>
<keyword id="KW-0479">Metal-binding</keyword>
<keyword id="KW-0597">Phosphoprotein</keyword>
<keyword id="KW-0677">Repeat</keyword>
<keyword id="KW-0770">Synapse</keyword>
<keyword id="KW-0812">Transmembrane</keyword>
<keyword id="KW-1133">Transmembrane helix</keyword>
<evidence type="ECO:0000250" key="1"/>
<evidence type="ECO:0000255" key="2"/>
<evidence type="ECO:0000255" key="3">
    <source>
        <dbReference type="PROSITE-ProRule" id="PRU00041"/>
    </source>
</evidence>
<evidence type="ECO:0000256" key="4">
    <source>
        <dbReference type="SAM" id="MobiDB-lite"/>
    </source>
</evidence>
<evidence type="ECO:0000269" key="5">
    <source>
    </source>
</evidence>
<evidence type="ECO:0000269" key="6">
    <source>
    </source>
</evidence>
<evidence type="ECO:0000269" key="7">
    <source>
    </source>
</evidence>
<evidence type="ECO:0000303" key="8">
    <source>
    </source>
</evidence>
<evidence type="ECO:0000303" key="9">
    <source>
    </source>
</evidence>
<evidence type="ECO:0000305" key="10"/>
<proteinExistence type="evidence at protein level"/>
<feature type="chain" id="PRO_0000183987" description="Synaptotagmin-1">
    <location>
        <begin position="1"/>
        <end position="428"/>
    </location>
</feature>
<feature type="topological domain" description="Vesicular" evidence="2">
    <location>
        <begin position="1"/>
        <end position="67"/>
    </location>
</feature>
<feature type="transmembrane region" description="Helical" evidence="2">
    <location>
        <begin position="68"/>
        <end position="92"/>
    </location>
</feature>
<feature type="topological domain" description="Cytoplasmic" evidence="2">
    <location>
        <begin position="93"/>
        <end position="428"/>
    </location>
</feature>
<feature type="domain" description="C2 1" evidence="3">
    <location>
        <begin position="153"/>
        <end position="272"/>
    </location>
</feature>
<feature type="domain" description="C2 2" evidence="3">
    <location>
        <begin position="286"/>
        <end position="419"/>
    </location>
</feature>
<feature type="region of interest" description="Disordered" evidence="4">
    <location>
        <begin position="16"/>
        <end position="50"/>
    </location>
</feature>
<feature type="region of interest" description="Phospholipid binding" evidence="10">
    <location>
        <begin position="147"/>
        <end position="395"/>
    </location>
</feature>
<feature type="binding site" evidence="3">
    <location>
        <position position="184"/>
    </location>
    <ligand>
        <name>Ca(2+)</name>
        <dbReference type="ChEBI" id="CHEBI:29108"/>
        <label>1</label>
    </ligand>
</feature>
<feature type="binding site" evidence="3">
    <location>
        <position position="184"/>
    </location>
    <ligand>
        <name>Ca(2+)</name>
        <dbReference type="ChEBI" id="CHEBI:29108"/>
        <label>2</label>
    </ligand>
</feature>
<feature type="binding site" evidence="3">
    <location>
        <position position="190"/>
    </location>
    <ligand>
        <name>Ca(2+)</name>
        <dbReference type="ChEBI" id="CHEBI:29108"/>
        <label>1</label>
    </ligand>
</feature>
<feature type="binding site" evidence="3">
    <location>
        <position position="242"/>
    </location>
    <ligand>
        <name>Ca(2+)</name>
        <dbReference type="ChEBI" id="CHEBI:29108"/>
        <label>1</label>
    </ligand>
</feature>
<feature type="binding site" evidence="3">
    <location>
        <position position="242"/>
    </location>
    <ligand>
        <name>Ca(2+)</name>
        <dbReference type="ChEBI" id="CHEBI:29108"/>
        <label>2</label>
    </ligand>
</feature>
<feature type="binding site" evidence="3">
    <location>
        <position position="243"/>
    </location>
    <ligand>
        <name>Ca(2+)</name>
        <dbReference type="ChEBI" id="CHEBI:29108"/>
        <label>1</label>
    </ligand>
</feature>
<feature type="binding site" evidence="3">
    <location>
        <position position="244"/>
    </location>
    <ligand>
        <name>Ca(2+)</name>
        <dbReference type="ChEBI" id="CHEBI:29108"/>
        <label>1</label>
    </ligand>
</feature>
<feature type="binding site" evidence="3">
    <location>
        <position position="244"/>
    </location>
    <ligand>
        <name>Ca(2+)</name>
        <dbReference type="ChEBI" id="CHEBI:29108"/>
        <label>2</label>
    </ligand>
</feature>
<feature type="binding site" evidence="3">
    <location>
        <position position="244"/>
    </location>
    <ligand>
        <name>Ca(2+)</name>
        <dbReference type="ChEBI" id="CHEBI:29108"/>
        <label>3</label>
    </ligand>
</feature>
<feature type="binding site" evidence="3">
    <location>
        <position position="247"/>
    </location>
    <ligand>
        <name>Ca(2+)</name>
        <dbReference type="ChEBI" id="CHEBI:29108"/>
        <label>3</label>
    </ligand>
</feature>
<feature type="binding site" evidence="3">
    <location>
        <position position="248"/>
    </location>
    <ligand>
        <name>Ca(2+)</name>
        <dbReference type="ChEBI" id="CHEBI:29108"/>
        <label>3</label>
    </ligand>
</feature>
<feature type="binding site" evidence="3">
    <location>
        <position position="250"/>
    </location>
    <ligand>
        <name>Ca(2+)</name>
        <dbReference type="ChEBI" id="CHEBI:29108"/>
        <label>2</label>
    </ligand>
</feature>
<feature type="binding site" evidence="3">
    <location>
        <position position="250"/>
    </location>
    <ligand>
        <name>Ca(2+)</name>
        <dbReference type="ChEBI" id="CHEBI:29108"/>
        <label>3</label>
    </ligand>
</feature>
<feature type="binding site" evidence="3">
    <location>
        <position position="317"/>
    </location>
    <ligand>
        <name>Ca(2+)</name>
        <dbReference type="ChEBI" id="CHEBI:29108"/>
        <label>4</label>
    </ligand>
</feature>
<feature type="binding site" evidence="3">
    <location>
        <position position="323"/>
    </location>
    <ligand>
        <name>Ca(2+)</name>
        <dbReference type="ChEBI" id="CHEBI:29108"/>
        <label>4</label>
    </ligand>
</feature>
<feature type="binding site" evidence="3">
    <location>
        <position position="377"/>
    </location>
    <ligand>
        <name>Ca(2+)</name>
        <dbReference type="ChEBI" id="CHEBI:29108"/>
        <label>4</label>
    </ligand>
</feature>
<feature type="binding site" evidence="3">
    <location>
        <position position="379"/>
    </location>
    <ligand>
        <name>Ca(2+)</name>
        <dbReference type="ChEBI" id="CHEBI:29108"/>
        <label>4</label>
    </ligand>
</feature>
<feature type="modified residue" description="Phosphoserine; by PRKC2" evidence="5">
    <location>
        <position position="123"/>
    </location>
</feature>
<feature type="splice variant" id="VSP_013344" description="In isoform 2." evidence="9">
    <location>
        <begin position="128"/>
        <end position="129"/>
    </location>
</feature>
<feature type="splice variant" id="VSP_013345" description="In isoform 3." evidence="8">
    <original>ALLQGTKRLKKKKTTIKKNTLNPYFNESFG</original>
    <variation>SLMLNGKRVKKKKTTIKKCTLNPYYNESFT</variation>
    <location>
        <begin position="329"/>
        <end position="358"/>
    </location>
</feature>
<feature type="mutagenesis site" description="Loss of phosphorylation by PRKC2." evidence="5">
    <original>S</original>
    <variation>A</variation>
    <location>
        <position position="123"/>
    </location>
</feature>
<feature type="mutagenesis site" description="Confers higher proteolytic instability." evidence="6">
    <original>N</original>
    <variation>C</variation>
    <location>
        <position position="347"/>
    </location>
</feature>
<feature type="mutagenesis site" description="Confers higher proteolytic stability characteristic for isoform 3 to isoform 1." evidence="6">
    <original>G</original>
    <variation>T</variation>
    <location>
        <position position="358"/>
    </location>
</feature>
<feature type="sequence conflict" description="In Ref. 3; AAQ91785." evidence="10" ref="3">
    <original>S</original>
    <variation>C</variation>
    <location>
        <position position="95"/>
    </location>
</feature>
<name>SY65_APLCA</name>